<feature type="chain" id="PRO_0000217807" description="Photosystem I assembly protein Ycf3">
    <location>
        <begin position="1"/>
        <end position="170"/>
    </location>
</feature>
<feature type="repeat" description="TPR 1">
    <location>
        <begin position="35"/>
        <end position="68"/>
    </location>
</feature>
<feature type="repeat" description="TPR 2">
    <location>
        <begin position="72"/>
        <end position="105"/>
    </location>
</feature>
<feature type="repeat" description="TPR 3">
    <location>
        <begin position="120"/>
        <end position="153"/>
    </location>
</feature>
<feature type="sequence conflict" description="In Ref. 4." evidence="3" ref="4">
    <original>S</original>
    <variation>L</variation>
    <location>
        <position position="16"/>
    </location>
</feature>
<name>YCF3_MAIZE</name>
<reference key="1">
    <citation type="journal article" date="1991" name="Plant Mol. Biol.">
        <title>Nucleotide sequence and transcription of maize plastid genome Bam HI fragment 14 containing ORF170.</title>
        <authorList>
            <person name="Kangasjarvi J."/>
            <person name="McCullough A."/>
            <person name="Gengenbach B.G."/>
        </authorList>
    </citation>
    <scope>NUCLEOTIDE SEQUENCE [LARGE SCALE GENOMIC DNA]</scope>
    <source>
        <strain>cv. B73</strain>
        <tissue>Seedling leaf</tissue>
    </source>
</reference>
<reference key="2">
    <citation type="journal article" date="1995" name="J. Mol. Biol.">
        <title>Complete sequence of the maize chloroplast genome: gene content, hotspots of divergence and fine tuning of genetic information by transcript editing.</title>
        <authorList>
            <person name="Maier R.M."/>
            <person name="Neckermann K."/>
            <person name="Igloi G.L."/>
            <person name="Koessel H."/>
        </authorList>
    </citation>
    <scope>NUCLEOTIDE SEQUENCE [LARGE SCALE GENOMIC DNA]</scope>
    <source>
        <strain>cv. B73</strain>
    </source>
</reference>
<reference key="3">
    <citation type="journal article" date="1994" name="Proc. Natl. Acad. Sci. U.S.A.">
        <title>Complete RNA editing of unspliced and dicistronic transcripts of the intron-containing reading frame IRF170 from maize chloroplasts.</title>
        <authorList>
            <person name="Ruf S."/>
            <person name="Zeltz P."/>
            <person name="Koessel H."/>
        </authorList>
    </citation>
    <scope>NUCLEOTIDE SEQUENCE [GENOMIC DNA]</scope>
    <scope>RNA EDITING</scope>
</reference>
<reference key="4">
    <citation type="submission" date="1995-08" db="EMBL/GenBank/DDBJ databases">
        <title>Differential transcription and processing of an intron-containing maize plastid gene leads to mRNAs potentially translatable into three distinct proteins containing a conserved tetratricopeptide repeat motif.</title>
        <authorList>
            <person name="Kangasjaervi J."/>
            <person name="Gengenbach B."/>
        </authorList>
    </citation>
    <scope>NUCLEOTIDE SEQUENCE [MRNA]</scope>
    <source>
        <strain>cv. A188</strain>
    </source>
</reference>
<geneLocation type="chloroplast"/>
<evidence type="ECO:0000255" key="1">
    <source>
        <dbReference type="HAMAP-Rule" id="MF_00439"/>
    </source>
</evidence>
<evidence type="ECO:0000269" key="2">
    <source>
    </source>
</evidence>
<evidence type="ECO:0000305" key="3"/>
<protein>
    <recommendedName>
        <fullName evidence="1">Photosystem I assembly protein Ycf3</fullName>
    </recommendedName>
    <alternativeName>
        <fullName>IRF170</fullName>
    </alternativeName>
</protein>
<sequence length="170" mass="19816">MPRSRINGNFIDKTFSIVANILLQIIPTTSGEKRAFTYYRDGMLAQSEGNYAEALQNYYEAMRLEIDPYDRSYILYNIGLIHTSNGEHTKALEYYFRALERNPFLPQAFNNMAVICHYRGEQAILQGDSEIAEAWFDQAAEYWKQAIALTPGNYIEAQNWLKITKRFEFE</sequence>
<accession>P27324</accession>
<accession>Q36720</accession>
<accession>Q36858</accession>
<dbReference type="EMBL" id="X58080">
    <property type="protein sequence ID" value="CAA41108.1"/>
    <property type="status" value="ALT_SEQ"/>
    <property type="molecule type" value="Genomic_DNA"/>
</dbReference>
<dbReference type="EMBL" id="X86563">
    <property type="protein sequence ID" value="CAA60287.1"/>
    <property type="status" value="ALT_SEQ"/>
    <property type="molecule type" value="Genomic_DNA"/>
</dbReference>
<dbReference type="EMBL" id="S69196">
    <property type="protein sequence ID" value="AAB30283.2"/>
    <property type="molecule type" value="Genomic_DNA"/>
</dbReference>
<dbReference type="EMBL" id="S69194">
    <property type="protein sequence ID" value="AAB30283.2"/>
    <property type="status" value="JOINED"/>
    <property type="molecule type" value="Genomic_DNA"/>
</dbReference>
<dbReference type="EMBL" id="S69195">
    <property type="protein sequence ID" value="AAB30283.2"/>
    <property type="status" value="JOINED"/>
    <property type="molecule type" value="Genomic_DNA"/>
</dbReference>
<dbReference type="EMBL" id="X62424">
    <property type="protein sequence ID" value="CAA44290.1"/>
    <property type="molecule type" value="mRNA"/>
</dbReference>
<dbReference type="PIR" id="S58553">
    <property type="entry name" value="S58553"/>
</dbReference>
<dbReference type="PIR" id="S60189">
    <property type="entry name" value="S60189"/>
</dbReference>
<dbReference type="RefSeq" id="NP_043026.1">
    <property type="nucleotide sequence ID" value="NC_001666.2"/>
</dbReference>
<dbReference type="SMR" id="P27324"/>
<dbReference type="FunCoup" id="P27324">
    <property type="interactions" value="29"/>
</dbReference>
<dbReference type="STRING" id="4577.P27324"/>
<dbReference type="GeneID" id="1466361"/>
<dbReference type="KEGG" id="zma:1466361"/>
<dbReference type="MaizeGDB" id="69194"/>
<dbReference type="InParanoid" id="P27324"/>
<dbReference type="OrthoDB" id="613316at2759"/>
<dbReference type="Proteomes" id="UP000007305">
    <property type="component" value="Chloroplast"/>
</dbReference>
<dbReference type="GO" id="GO:0009535">
    <property type="term" value="C:chloroplast thylakoid membrane"/>
    <property type="evidence" value="ECO:0007669"/>
    <property type="project" value="UniProtKB-SubCell"/>
</dbReference>
<dbReference type="GO" id="GO:0048564">
    <property type="term" value="P:photosystem I assembly"/>
    <property type="evidence" value="ECO:0000318"/>
    <property type="project" value="GO_Central"/>
</dbReference>
<dbReference type="FunFam" id="1.25.40.10:FF:000004">
    <property type="entry name" value="Photosystem I assembly protein Ycf3"/>
    <property type="match status" value="1"/>
</dbReference>
<dbReference type="Gene3D" id="1.25.40.10">
    <property type="entry name" value="Tetratricopeptide repeat domain"/>
    <property type="match status" value="1"/>
</dbReference>
<dbReference type="HAMAP" id="MF_00439">
    <property type="entry name" value="Ycf3"/>
    <property type="match status" value="1"/>
</dbReference>
<dbReference type="InterPro" id="IPR022818">
    <property type="entry name" value="PSI_Ycf3_assembly"/>
</dbReference>
<dbReference type="InterPro" id="IPR011990">
    <property type="entry name" value="TPR-like_helical_dom_sf"/>
</dbReference>
<dbReference type="InterPro" id="IPR019734">
    <property type="entry name" value="TPR_rpt"/>
</dbReference>
<dbReference type="InterPro" id="IPR051685">
    <property type="entry name" value="Ycf3/AcsC/BcsC/TPR_MFPF"/>
</dbReference>
<dbReference type="NCBIfam" id="NF002725">
    <property type="entry name" value="PRK02603.1"/>
    <property type="match status" value="1"/>
</dbReference>
<dbReference type="PANTHER" id="PTHR44943">
    <property type="entry name" value="CELLULOSE SYNTHASE OPERON PROTEIN C"/>
    <property type="match status" value="1"/>
</dbReference>
<dbReference type="PANTHER" id="PTHR44943:SF8">
    <property type="entry name" value="TPR REPEAT-CONTAINING PROTEIN MJ0263"/>
    <property type="match status" value="1"/>
</dbReference>
<dbReference type="Pfam" id="PF00515">
    <property type="entry name" value="TPR_1"/>
    <property type="match status" value="1"/>
</dbReference>
<dbReference type="SMART" id="SM00028">
    <property type="entry name" value="TPR"/>
    <property type="match status" value="3"/>
</dbReference>
<dbReference type="SUPFAM" id="SSF48452">
    <property type="entry name" value="TPR-like"/>
    <property type="match status" value="1"/>
</dbReference>
<dbReference type="PROSITE" id="PS50005">
    <property type="entry name" value="TPR"/>
    <property type="match status" value="3"/>
</dbReference>
<dbReference type="PROSITE" id="PS50293">
    <property type="entry name" value="TPR_REGION"/>
    <property type="match status" value="1"/>
</dbReference>
<gene>
    <name evidence="1" type="primary">ycf3</name>
</gene>
<comment type="function">
    <text evidence="1">Essential for the assembly of the photosystem I (PSI) complex. May act as a chaperone-like factor to guide the assembly of the PSI subunits.</text>
</comment>
<comment type="subcellular location">
    <subcellularLocation>
        <location evidence="1">Plastid</location>
        <location evidence="1">Chloroplast thylakoid membrane</location>
        <topology evidence="1">Peripheral membrane protein</topology>
    </subcellularLocation>
</comment>
<comment type="RNA editing">
    <location>
        <position position="15" evidence="2"/>
    </location>
    <location>
        <position position="62" evidence="2"/>
    </location>
    <text>Editing is independent of both splicing and processing of the primary transcript.</text>
</comment>
<comment type="similarity">
    <text evidence="1">Belongs to the Ycf3 family.</text>
</comment>
<keyword id="KW-0150">Chloroplast</keyword>
<keyword id="KW-0472">Membrane</keyword>
<keyword id="KW-0602">Photosynthesis</keyword>
<keyword id="KW-0934">Plastid</keyword>
<keyword id="KW-1185">Reference proteome</keyword>
<keyword id="KW-0677">Repeat</keyword>
<keyword id="KW-0691">RNA editing</keyword>
<keyword id="KW-0793">Thylakoid</keyword>
<keyword id="KW-0802">TPR repeat</keyword>
<proteinExistence type="evidence at transcript level"/>
<organism>
    <name type="scientific">Zea mays</name>
    <name type="common">Maize</name>
    <dbReference type="NCBI Taxonomy" id="4577"/>
    <lineage>
        <taxon>Eukaryota</taxon>
        <taxon>Viridiplantae</taxon>
        <taxon>Streptophyta</taxon>
        <taxon>Embryophyta</taxon>
        <taxon>Tracheophyta</taxon>
        <taxon>Spermatophyta</taxon>
        <taxon>Magnoliopsida</taxon>
        <taxon>Liliopsida</taxon>
        <taxon>Poales</taxon>
        <taxon>Poaceae</taxon>
        <taxon>PACMAD clade</taxon>
        <taxon>Panicoideae</taxon>
        <taxon>Andropogonodae</taxon>
        <taxon>Andropogoneae</taxon>
        <taxon>Tripsacinae</taxon>
        <taxon>Zea</taxon>
    </lineage>
</organism>